<protein>
    <recommendedName>
        <fullName evidence="12">Dual specificity protein phosphatase 1</fullName>
        <ecNumber evidence="7 8">3.1.3.16</ecNumber>
        <ecNumber evidence="7 8">3.1.3.48</ecNumber>
    </recommendedName>
    <alternativeName>
        <fullName evidence="10">Mitogen-activated protein kinase phosphatase 1</fullName>
        <shortName evidence="10">MAP kinase phosphatase 1</shortName>
        <shortName evidence="10">MKP-1</shortName>
    </alternativeName>
    <alternativeName>
        <fullName evidence="9">Protein-tyrosine phosphatase 3CH134</fullName>
    </alternativeName>
    <alternativeName>
        <fullName evidence="11">Protein-tyrosine phosphatase ERP</fullName>
    </alternativeName>
</protein>
<name>DUS1_MOUSE</name>
<accession>P28563</accession>
<gene>
    <name evidence="13" type="primary">Dusp1</name>
    <name evidence="9" type="synonym">3ch134</name>
    <name type="synonym">Mkp1</name>
    <name type="synonym">Ptpn10</name>
    <name type="synonym">Ptpn16</name>
</gene>
<keyword id="KW-0131">Cell cycle</keyword>
<keyword id="KW-0378">Hydrolase</keyword>
<keyword id="KW-0539">Nucleus</keyword>
<keyword id="KW-0597">Phosphoprotein</keyword>
<keyword id="KW-0904">Protein phosphatase</keyword>
<keyword id="KW-1185">Reference proteome</keyword>
<keyword id="KW-0832">Ubl conjugation</keyword>
<evidence type="ECO:0000250" key="1">
    <source>
        <dbReference type="UniProtKB" id="Q91790"/>
    </source>
</evidence>
<evidence type="ECO:0000255" key="2">
    <source>
        <dbReference type="PROSITE-ProRule" id="PRU00160"/>
    </source>
</evidence>
<evidence type="ECO:0000255" key="3">
    <source>
        <dbReference type="PROSITE-ProRule" id="PRU00173"/>
    </source>
</evidence>
<evidence type="ECO:0000255" key="4">
    <source>
        <dbReference type="PROSITE-ProRule" id="PRU10044"/>
    </source>
</evidence>
<evidence type="ECO:0000269" key="5">
    <source>
    </source>
</evidence>
<evidence type="ECO:0000269" key="6">
    <source>
    </source>
</evidence>
<evidence type="ECO:0000269" key="7">
    <source>
    </source>
</evidence>
<evidence type="ECO:0000269" key="8">
    <source>
    </source>
</evidence>
<evidence type="ECO:0000303" key="9">
    <source>
    </source>
</evidence>
<evidence type="ECO:0000303" key="10">
    <source>
    </source>
</evidence>
<evidence type="ECO:0000303" key="11">
    <source>
    </source>
</evidence>
<evidence type="ECO:0000305" key="12"/>
<evidence type="ECO:0000312" key="13">
    <source>
        <dbReference type="MGI" id="MGI:105120"/>
    </source>
</evidence>
<sequence length="367" mass="39370">MVMEVGILDAGGLRALLREGAAQCLLLDCRSFFAFNAGHIAGSVNVRFSTIVRRRAKGAMGLEHIVPNAELRGRLLAGAYHAVVLLDERSASLDGAKRDGTLALAAGALCREARSTQVFFLQGGYEAFSASCPELCSKQSTPTGLSLPLSTSVPDSAESGCSSCSTPLYDQGGPVEILSFLYLGSAYHASRKDMLDALGITALINVSANCPNHFEGHYQYKSIPVEDNHKADISSWFNEAIDFIDSIKDAGGRVFVHCQAGISRSATICLAYLMRTNRVKLDEAFEFVKQRRSIISPNFSFMGQLLQFESQVLAPHCSAEAGSPAMAVLDRGTSTTTVFNFPVSIPVHPTNSALNYLKSPITTSPSC</sequence>
<proteinExistence type="evidence at protein level"/>
<comment type="function">
    <text evidence="7">Dual specificity phosphatase that dephosphorylates MAP kinase MAPK1/ERK2 on both 'Thr-183' and 'Tyr-185', regulating its activity during the meiotic cell cycle.</text>
</comment>
<comment type="catalytic activity">
    <reaction evidence="4 7 8">
        <text>O-phospho-L-tyrosyl-[protein] + H2O = L-tyrosyl-[protein] + phosphate</text>
        <dbReference type="Rhea" id="RHEA:10684"/>
        <dbReference type="Rhea" id="RHEA-COMP:10136"/>
        <dbReference type="Rhea" id="RHEA-COMP:20101"/>
        <dbReference type="ChEBI" id="CHEBI:15377"/>
        <dbReference type="ChEBI" id="CHEBI:43474"/>
        <dbReference type="ChEBI" id="CHEBI:46858"/>
        <dbReference type="ChEBI" id="CHEBI:61978"/>
        <dbReference type="EC" id="3.1.3.48"/>
    </reaction>
</comment>
<comment type="catalytic activity">
    <reaction evidence="7 8">
        <text>O-phospho-L-seryl-[protein] + H2O = L-seryl-[protein] + phosphate</text>
        <dbReference type="Rhea" id="RHEA:20629"/>
        <dbReference type="Rhea" id="RHEA-COMP:9863"/>
        <dbReference type="Rhea" id="RHEA-COMP:11604"/>
        <dbReference type="ChEBI" id="CHEBI:15377"/>
        <dbReference type="ChEBI" id="CHEBI:29999"/>
        <dbReference type="ChEBI" id="CHEBI:43474"/>
        <dbReference type="ChEBI" id="CHEBI:83421"/>
        <dbReference type="EC" id="3.1.3.16"/>
    </reaction>
</comment>
<comment type="catalytic activity">
    <reaction evidence="7 8">
        <text>O-phospho-L-threonyl-[protein] + H2O = L-threonyl-[protein] + phosphate</text>
        <dbReference type="Rhea" id="RHEA:47004"/>
        <dbReference type="Rhea" id="RHEA-COMP:11060"/>
        <dbReference type="Rhea" id="RHEA-COMP:11605"/>
        <dbReference type="ChEBI" id="CHEBI:15377"/>
        <dbReference type="ChEBI" id="CHEBI:30013"/>
        <dbReference type="ChEBI" id="CHEBI:43474"/>
        <dbReference type="ChEBI" id="CHEBI:61977"/>
        <dbReference type="EC" id="3.1.3.16"/>
    </reaction>
</comment>
<comment type="subcellular location">
    <subcellularLocation>
        <location evidence="1">Nucleus</location>
    </subcellularLocation>
</comment>
<comment type="developmental stage">
    <text evidence="8">Expression in lung increases after birth.</text>
</comment>
<comment type="induction">
    <text evidence="6 8">Up-regulated by growth factors and mitogens.</text>
</comment>
<comment type="PTM">
    <text evidence="5">Phosphorylation at Ser-359 and Ser-364 by MAPK1/ERK2 and MAPK3/ERK1 reduces its rate of degradation.</text>
</comment>
<comment type="PTM">
    <text evidence="1">'Lys-48'-linked polyubiquitinated by NEURL3, leading to proteasomal degradation.</text>
</comment>
<comment type="similarity">
    <text evidence="12">Belongs to the protein-tyrosine phosphatase family. Non-receptor class dual specificity subfamily.</text>
</comment>
<organism>
    <name type="scientific">Mus musculus</name>
    <name type="common">Mouse</name>
    <dbReference type="NCBI Taxonomy" id="10090"/>
    <lineage>
        <taxon>Eukaryota</taxon>
        <taxon>Metazoa</taxon>
        <taxon>Chordata</taxon>
        <taxon>Craniata</taxon>
        <taxon>Vertebrata</taxon>
        <taxon>Euteleostomi</taxon>
        <taxon>Mammalia</taxon>
        <taxon>Eutheria</taxon>
        <taxon>Euarchontoglires</taxon>
        <taxon>Glires</taxon>
        <taxon>Rodentia</taxon>
        <taxon>Myomorpha</taxon>
        <taxon>Muroidea</taxon>
        <taxon>Muridae</taxon>
        <taxon>Murinae</taxon>
        <taxon>Mus</taxon>
        <taxon>Mus</taxon>
    </lineage>
</organism>
<feature type="chain" id="PRO_0000094791" description="Dual specificity protein phosphatase 1">
    <location>
        <begin position="1"/>
        <end position="367"/>
    </location>
</feature>
<feature type="domain" description="Rhodanese" evidence="3">
    <location>
        <begin position="20"/>
        <end position="137"/>
    </location>
</feature>
<feature type="domain" description="Tyrosine-protein phosphatase" evidence="2">
    <location>
        <begin position="173"/>
        <end position="314"/>
    </location>
</feature>
<feature type="active site" description="Phosphocysteine intermediate" evidence="2 7">
    <location>
        <position position="258"/>
    </location>
</feature>
<feature type="modified residue" description="Phosphoserine; by MAPK1 and MAPK3" evidence="5">
    <location>
        <position position="359"/>
    </location>
</feature>
<feature type="modified residue" description="Phosphoserine; by MAPK1 and MAPK3" evidence="5">
    <location>
        <position position="364"/>
    </location>
</feature>
<feature type="mutagenesis site" description="Loss of phosphatase activity." evidence="8">
    <location>
        <begin position="257"/>
        <end position="264"/>
    </location>
</feature>
<feature type="mutagenesis site" description="Loss of phosphatase activity." evidence="7">
    <original>C</original>
    <variation>S</variation>
    <location>
        <position position="258"/>
    </location>
</feature>
<reference key="1">
    <citation type="journal article" date="1992" name="Oncogene">
        <title>cDNA sequence of a growth factor-inducible immediate early gene and characterization of its encoded protein.</title>
        <authorList>
            <person name="Charles C.H."/>
            <person name="Abler A.S."/>
            <person name="Lau L.F."/>
        </authorList>
    </citation>
    <scope>NUCLEOTIDE SEQUENCE [MRNA]</scope>
    <scope>INDUCTION</scope>
    <source>
        <strain>BALB/cJ</strain>
    </source>
</reference>
<reference key="2">
    <citation type="journal article" date="1993" name="Mol. Cell. Biol.">
        <title>Structure, mapping, and expression of erp, a growth factor-inducible gene encoding a nontransmembrane protein tyrosine phosphatase, and effect of ERP on cell growth.</title>
        <authorList>
            <person name="Noguchi T."/>
            <person name="Metz R."/>
            <person name="Chen L."/>
            <person name="Mattei M.-G."/>
            <person name="Carrasco D."/>
            <person name="Bravo R."/>
        </authorList>
    </citation>
    <scope>NUCLEOTIDE SEQUENCE [GENOMIC DNA]</scope>
    <scope>CATALYTIC ACTIVITY</scope>
    <scope>DEVELOPMENTAL STAGE</scope>
    <scope>INDUCTION</scope>
    <scope>MUTAGENESIS OF 257-HIS--ARG-264</scope>
    <source>
        <tissue>Liver</tissue>
    </source>
</reference>
<reference key="3">
    <citation type="journal article" date="2004" name="Genome Res.">
        <title>The status, quality, and expansion of the NIH full-length cDNA project: the Mammalian Gene Collection (MGC).</title>
        <authorList>
            <consortium name="The MGC Project Team"/>
        </authorList>
    </citation>
    <scope>NUCLEOTIDE SEQUENCE [LARGE SCALE MRNA]</scope>
    <source>
        <strain>Czech II</strain>
        <tissue>Mammary gland</tissue>
    </source>
</reference>
<reference key="4">
    <citation type="journal article" date="1993" name="Cell">
        <title>MKP-1 (3CH134), an immediate early gene product, is a dual specificity phosphatase that dephosphorylates MAP kinase in vivo.</title>
        <authorList>
            <person name="Sun H."/>
            <person name="Charles C.H."/>
            <person name="Lau L.F."/>
            <person name="Tonks N.K."/>
        </authorList>
    </citation>
    <scope>FUNCTION</scope>
    <scope>CATALYTIC ACTIVITY</scope>
    <scope>MUTAGENESIS OF CYS-258</scope>
    <scope>ACTIVE SITE</scope>
</reference>
<reference key="5">
    <citation type="journal article" date="1999" name="Science">
        <title>Reduced MAP kinase phosphatase-1 degradation after p42/p44MAPK-dependent phosphorylation.</title>
        <authorList>
            <person name="Brondello J.M."/>
            <person name="Pouyssegur J."/>
            <person name="McKenzie F.R."/>
        </authorList>
    </citation>
    <scope>PHOSPHORYLATION AT SER-359 AND SER-364</scope>
</reference>
<dbReference type="EC" id="3.1.3.16" evidence="7 8"/>
<dbReference type="EC" id="3.1.3.48" evidence="7 8"/>
<dbReference type="EMBL" id="X61940">
    <property type="protein sequence ID" value="CAA43944.1"/>
    <property type="molecule type" value="mRNA"/>
</dbReference>
<dbReference type="EMBL" id="S64851">
    <property type="protein sequence ID" value="AAB27882.1"/>
    <property type="molecule type" value="Genomic_DNA"/>
</dbReference>
<dbReference type="EMBL" id="BC006967">
    <property type="protein sequence ID" value="AAH06967.1"/>
    <property type="molecule type" value="mRNA"/>
</dbReference>
<dbReference type="CCDS" id="CCDS28552.1"/>
<dbReference type="PIR" id="A54681">
    <property type="entry name" value="S24411"/>
</dbReference>
<dbReference type="RefSeq" id="NP_038670.1">
    <property type="nucleotide sequence ID" value="NM_013642.3"/>
</dbReference>
<dbReference type="SMR" id="P28563"/>
<dbReference type="BioGRID" id="202482">
    <property type="interactions" value="3"/>
</dbReference>
<dbReference type="DIP" id="DIP-29877N"/>
<dbReference type="FunCoup" id="P28563">
    <property type="interactions" value="1689"/>
</dbReference>
<dbReference type="IntAct" id="P28563">
    <property type="interactions" value="1"/>
</dbReference>
<dbReference type="STRING" id="10090.ENSMUSP00000025025"/>
<dbReference type="BindingDB" id="P28563"/>
<dbReference type="ChEMBL" id="CHEMBL5623"/>
<dbReference type="DrugCentral" id="P28563"/>
<dbReference type="iPTMnet" id="P28563"/>
<dbReference type="PhosphoSitePlus" id="P28563"/>
<dbReference type="PaxDb" id="10090-ENSMUSP00000025025"/>
<dbReference type="ProteomicsDB" id="277609"/>
<dbReference type="Antibodypedia" id="4343">
    <property type="antibodies" value="573 antibodies from 38 providers"/>
</dbReference>
<dbReference type="DNASU" id="19252"/>
<dbReference type="Ensembl" id="ENSMUST00000025025.7">
    <property type="protein sequence ID" value="ENSMUSP00000025025.7"/>
    <property type="gene ID" value="ENSMUSG00000024190.8"/>
</dbReference>
<dbReference type="GeneID" id="19252"/>
<dbReference type="KEGG" id="mmu:19252"/>
<dbReference type="UCSC" id="uc008bee.2">
    <property type="organism name" value="mouse"/>
</dbReference>
<dbReference type="AGR" id="MGI:105120"/>
<dbReference type="CTD" id="1843"/>
<dbReference type="MGI" id="MGI:105120">
    <property type="gene designation" value="Dusp1"/>
</dbReference>
<dbReference type="VEuPathDB" id="HostDB:ENSMUSG00000024190"/>
<dbReference type="eggNOG" id="KOG1716">
    <property type="taxonomic scope" value="Eukaryota"/>
</dbReference>
<dbReference type="GeneTree" id="ENSGT00940000159044"/>
<dbReference type="HOGENOM" id="CLU_027074_0_2_1"/>
<dbReference type="InParanoid" id="P28563"/>
<dbReference type="OMA" id="MVNMQVC"/>
<dbReference type="OrthoDB" id="165342at2759"/>
<dbReference type="PhylomeDB" id="P28563"/>
<dbReference type="TreeFam" id="TF105122"/>
<dbReference type="Reactome" id="R-MMU-112409">
    <property type="pathway name" value="RAF-independent MAPK1/3 activation"/>
</dbReference>
<dbReference type="Reactome" id="R-MMU-5675221">
    <property type="pathway name" value="Negative regulation of MAPK pathway"/>
</dbReference>
<dbReference type="BioGRID-ORCS" id="19252">
    <property type="hits" value="3 hits in 79 CRISPR screens"/>
</dbReference>
<dbReference type="ChiTaRS" id="Dusp1">
    <property type="organism name" value="mouse"/>
</dbReference>
<dbReference type="PRO" id="PR:P28563"/>
<dbReference type="Proteomes" id="UP000000589">
    <property type="component" value="Chromosome 17"/>
</dbReference>
<dbReference type="RNAct" id="P28563">
    <property type="molecule type" value="protein"/>
</dbReference>
<dbReference type="Bgee" id="ENSMUSG00000024190">
    <property type="expression patterns" value="Expressed in granulocyte and 280 other cell types or tissues"/>
</dbReference>
<dbReference type="ExpressionAtlas" id="P28563">
    <property type="expression patterns" value="baseline and differential"/>
</dbReference>
<dbReference type="GO" id="GO:0005737">
    <property type="term" value="C:cytoplasm"/>
    <property type="evidence" value="ECO:0000250"/>
    <property type="project" value="UniProtKB"/>
</dbReference>
<dbReference type="GO" id="GO:0005634">
    <property type="term" value="C:nucleus"/>
    <property type="evidence" value="ECO:0000250"/>
    <property type="project" value="UniProtKB"/>
</dbReference>
<dbReference type="GO" id="GO:0019838">
    <property type="term" value="F:growth factor binding"/>
    <property type="evidence" value="ECO:0007669"/>
    <property type="project" value="Ensembl"/>
</dbReference>
<dbReference type="GO" id="GO:0017017">
    <property type="term" value="F:MAP kinase tyrosine/serine/threonine phosphatase activity"/>
    <property type="evidence" value="ECO:0000315"/>
    <property type="project" value="UniProtKB"/>
</dbReference>
<dbReference type="GO" id="GO:0051019">
    <property type="term" value="F:mitogen-activated protein kinase binding"/>
    <property type="evidence" value="ECO:0000314"/>
    <property type="project" value="UniProtKB"/>
</dbReference>
<dbReference type="GO" id="GO:0004722">
    <property type="term" value="F:protein serine/threonine phosphatase activity"/>
    <property type="evidence" value="ECO:0000315"/>
    <property type="project" value="UniProtKB"/>
</dbReference>
<dbReference type="GO" id="GO:0004725">
    <property type="term" value="F:protein tyrosine phosphatase activity"/>
    <property type="evidence" value="ECO:0000315"/>
    <property type="project" value="UniProtKB"/>
</dbReference>
<dbReference type="GO" id="GO:1990869">
    <property type="term" value="P:cellular response to chemokine"/>
    <property type="evidence" value="ECO:0007669"/>
    <property type="project" value="Ensembl"/>
</dbReference>
<dbReference type="GO" id="GO:0032870">
    <property type="term" value="P:cellular response to hormone stimulus"/>
    <property type="evidence" value="ECO:0007669"/>
    <property type="project" value="Ensembl"/>
</dbReference>
<dbReference type="GO" id="GO:0035556">
    <property type="term" value="P:intracellular signal transduction"/>
    <property type="evidence" value="ECO:0007669"/>
    <property type="project" value="Ensembl"/>
</dbReference>
<dbReference type="GO" id="GO:0043066">
    <property type="term" value="P:negative regulation of apoptotic process"/>
    <property type="evidence" value="ECO:0007669"/>
    <property type="project" value="Ensembl"/>
</dbReference>
<dbReference type="GO" id="GO:0007162">
    <property type="term" value="P:negative regulation of cell adhesion"/>
    <property type="evidence" value="ECO:0007669"/>
    <property type="project" value="Ensembl"/>
</dbReference>
<dbReference type="GO" id="GO:0008285">
    <property type="term" value="P:negative regulation of cell population proliferation"/>
    <property type="evidence" value="ECO:0000315"/>
    <property type="project" value="UniProtKB"/>
</dbReference>
<dbReference type="GO" id="GO:2000279">
    <property type="term" value="P:negative regulation of DNA biosynthetic process"/>
    <property type="evidence" value="ECO:0007669"/>
    <property type="project" value="Ensembl"/>
</dbReference>
<dbReference type="GO" id="GO:0070373">
    <property type="term" value="P:negative regulation of ERK1 and ERK2 cascade"/>
    <property type="evidence" value="ECO:0007669"/>
    <property type="project" value="Ensembl"/>
</dbReference>
<dbReference type="GO" id="GO:0043407">
    <property type="term" value="P:negative regulation of MAP kinase activity"/>
    <property type="evidence" value="ECO:0000250"/>
    <property type="project" value="UniProtKB"/>
</dbReference>
<dbReference type="GO" id="GO:0043409">
    <property type="term" value="P:negative regulation of MAPK cascade"/>
    <property type="evidence" value="ECO:0000315"/>
    <property type="project" value="UniProtKB"/>
</dbReference>
<dbReference type="GO" id="GO:0051447">
    <property type="term" value="P:negative regulation of meiotic cell cycle"/>
    <property type="evidence" value="ECO:0000250"/>
    <property type="project" value="UniProtKB"/>
</dbReference>
<dbReference type="GO" id="GO:0090027">
    <property type="term" value="P:negative regulation of monocyte chemotaxis"/>
    <property type="evidence" value="ECO:0007669"/>
    <property type="project" value="Ensembl"/>
</dbReference>
<dbReference type="GO" id="GO:1903753">
    <property type="term" value="P:negative regulation of p38MAPK cascade"/>
    <property type="evidence" value="ECO:0007669"/>
    <property type="project" value="Ensembl"/>
</dbReference>
<dbReference type="GO" id="GO:0070262">
    <property type="term" value="P:peptidyl-serine dephosphorylation"/>
    <property type="evidence" value="ECO:0000315"/>
    <property type="project" value="UniProtKB"/>
</dbReference>
<dbReference type="GO" id="GO:0035970">
    <property type="term" value="P:peptidyl-threonine dephosphorylation"/>
    <property type="evidence" value="ECO:0000315"/>
    <property type="project" value="UniProtKB"/>
</dbReference>
<dbReference type="GO" id="GO:0035335">
    <property type="term" value="P:peptidyl-tyrosine dephosphorylation"/>
    <property type="evidence" value="ECO:0000315"/>
    <property type="project" value="UniProtKB"/>
</dbReference>
<dbReference type="GO" id="GO:0043065">
    <property type="term" value="P:positive regulation of apoptotic process"/>
    <property type="evidence" value="ECO:0007669"/>
    <property type="project" value="Ensembl"/>
</dbReference>
<dbReference type="GO" id="GO:0090266">
    <property type="term" value="P:regulation of mitotic cell cycle spindle assembly checkpoint"/>
    <property type="evidence" value="ECO:0000250"/>
    <property type="project" value="UniProtKB"/>
</dbReference>
<dbReference type="GO" id="GO:0051592">
    <property type="term" value="P:response to calcium ion"/>
    <property type="evidence" value="ECO:0007669"/>
    <property type="project" value="Ensembl"/>
</dbReference>
<dbReference type="GO" id="GO:0051591">
    <property type="term" value="P:response to cAMP"/>
    <property type="evidence" value="ECO:0007669"/>
    <property type="project" value="Ensembl"/>
</dbReference>
<dbReference type="GO" id="GO:0032355">
    <property type="term" value="P:response to estradiol"/>
    <property type="evidence" value="ECO:0007669"/>
    <property type="project" value="Ensembl"/>
</dbReference>
<dbReference type="GO" id="GO:0051384">
    <property type="term" value="P:response to glucocorticoid"/>
    <property type="evidence" value="ECO:0007669"/>
    <property type="project" value="Ensembl"/>
</dbReference>
<dbReference type="GO" id="GO:0042542">
    <property type="term" value="P:response to hydrogen peroxide"/>
    <property type="evidence" value="ECO:0007669"/>
    <property type="project" value="Ensembl"/>
</dbReference>
<dbReference type="GO" id="GO:0009416">
    <property type="term" value="P:response to light stimulus"/>
    <property type="evidence" value="ECO:0007669"/>
    <property type="project" value="Ensembl"/>
</dbReference>
<dbReference type="GO" id="GO:0032526">
    <property type="term" value="P:response to retinoic acid"/>
    <property type="evidence" value="ECO:0007669"/>
    <property type="project" value="Ensembl"/>
</dbReference>
<dbReference type="GO" id="GO:0033574">
    <property type="term" value="P:response to testosterone"/>
    <property type="evidence" value="ECO:0007669"/>
    <property type="project" value="Ensembl"/>
</dbReference>
<dbReference type="CDD" id="cd14638">
    <property type="entry name" value="DSP_DUSP1"/>
    <property type="match status" value="1"/>
</dbReference>
<dbReference type="CDD" id="cd01446">
    <property type="entry name" value="DSP_MapKP"/>
    <property type="match status" value="1"/>
</dbReference>
<dbReference type="FunFam" id="3.90.190.10:FF:000015">
    <property type="entry name" value="Dual specificity phosphatase 4"/>
    <property type="match status" value="1"/>
</dbReference>
<dbReference type="FunFam" id="3.40.250.10:FF:000026">
    <property type="entry name" value="Dual specificity protein phosphatase"/>
    <property type="match status" value="1"/>
</dbReference>
<dbReference type="Gene3D" id="3.90.190.10">
    <property type="entry name" value="Protein tyrosine phosphatase superfamily"/>
    <property type="match status" value="1"/>
</dbReference>
<dbReference type="Gene3D" id="3.40.250.10">
    <property type="entry name" value="Rhodanese-like domain"/>
    <property type="match status" value="1"/>
</dbReference>
<dbReference type="InterPro" id="IPR020420">
    <property type="entry name" value="Atypical_DUSP_subfamB"/>
</dbReference>
<dbReference type="InterPro" id="IPR000340">
    <property type="entry name" value="Dual-sp_phosphatase_cat-dom"/>
</dbReference>
<dbReference type="InterPro" id="IPR008343">
    <property type="entry name" value="MKP"/>
</dbReference>
<dbReference type="InterPro" id="IPR029021">
    <property type="entry name" value="Prot-tyrosine_phosphatase-like"/>
</dbReference>
<dbReference type="InterPro" id="IPR001763">
    <property type="entry name" value="Rhodanese-like_dom"/>
</dbReference>
<dbReference type="InterPro" id="IPR036873">
    <property type="entry name" value="Rhodanese-like_dom_sf"/>
</dbReference>
<dbReference type="InterPro" id="IPR016130">
    <property type="entry name" value="Tyr_Pase_AS"/>
</dbReference>
<dbReference type="InterPro" id="IPR003595">
    <property type="entry name" value="Tyr_Pase_cat"/>
</dbReference>
<dbReference type="InterPro" id="IPR000387">
    <property type="entry name" value="Tyr_Pase_dom"/>
</dbReference>
<dbReference type="InterPro" id="IPR020422">
    <property type="entry name" value="TYR_PHOSPHATASE_DUAL_dom"/>
</dbReference>
<dbReference type="PANTHER" id="PTHR10159">
    <property type="entry name" value="DUAL SPECIFICITY PROTEIN PHOSPHATASE"/>
    <property type="match status" value="1"/>
</dbReference>
<dbReference type="PANTHER" id="PTHR10159:SF309">
    <property type="entry name" value="DUAL SPECIFICITY PROTEIN PHOSPHATASE 1"/>
    <property type="match status" value="1"/>
</dbReference>
<dbReference type="Pfam" id="PF00782">
    <property type="entry name" value="DSPc"/>
    <property type="match status" value="1"/>
</dbReference>
<dbReference type="Pfam" id="PF00581">
    <property type="entry name" value="Rhodanese"/>
    <property type="match status" value="1"/>
</dbReference>
<dbReference type="PIRSF" id="PIRSF000939">
    <property type="entry name" value="MAPK_Ptase"/>
    <property type="match status" value="1"/>
</dbReference>
<dbReference type="PRINTS" id="PR01908">
    <property type="entry name" value="ADSPHPHTASE"/>
</dbReference>
<dbReference type="PRINTS" id="PR01910">
    <property type="entry name" value="ADSPHPHTASEB"/>
</dbReference>
<dbReference type="PRINTS" id="PR01764">
    <property type="entry name" value="MAPKPHPHTASE"/>
</dbReference>
<dbReference type="SMART" id="SM00195">
    <property type="entry name" value="DSPc"/>
    <property type="match status" value="1"/>
</dbReference>
<dbReference type="SMART" id="SM00404">
    <property type="entry name" value="PTPc_motif"/>
    <property type="match status" value="1"/>
</dbReference>
<dbReference type="SMART" id="SM00450">
    <property type="entry name" value="RHOD"/>
    <property type="match status" value="1"/>
</dbReference>
<dbReference type="SUPFAM" id="SSF52799">
    <property type="entry name" value="(Phosphotyrosine protein) phosphatases II"/>
    <property type="match status" value="1"/>
</dbReference>
<dbReference type="SUPFAM" id="SSF52821">
    <property type="entry name" value="Rhodanese/Cell cycle control phosphatase"/>
    <property type="match status" value="1"/>
</dbReference>
<dbReference type="PROSITE" id="PS50206">
    <property type="entry name" value="RHODANESE_3"/>
    <property type="match status" value="1"/>
</dbReference>
<dbReference type="PROSITE" id="PS00383">
    <property type="entry name" value="TYR_PHOSPHATASE_1"/>
    <property type="match status" value="1"/>
</dbReference>
<dbReference type="PROSITE" id="PS50056">
    <property type="entry name" value="TYR_PHOSPHATASE_2"/>
    <property type="match status" value="1"/>
</dbReference>
<dbReference type="PROSITE" id="PS50054">
    <property type="entry name" value="TYR_PHOSPHATASE_DUAL"/>
    <property type="match status" value="1"/>
</dbReference>